<accession>Q5Z974</accession>
<accession>A3BFJ7</accession>
<accession>B7EAD1</accession>
<accession>Q0D9D4</accession>
<dbReference type="EC" id="3.4.24.-"/>
<dbReference type="EMBL" id="AP003685">
    <property type="protein sequence ID" value="BAD61706.1"/>
    <property type="molecule type" value="Genomic_DNA"/>
</dbReference>
<dbReference type="EMBL" id="AP008212">
    <property type="protein sequence ID" value="BAF20539.1"/>
    <property type="molecule type" value="Genomic_DNA"/>
</dbReference>
<dbReference type="EMBL" id="AP014962">
    <property type="protein sequence ID" value="BAS99592.1"/>
    <property type="molecule type" value="Genomic_DNA"/>
</dbReference>
<dbReference type="EMBL" id="CM000143">
    <property type="protein sequence ID" value="EAZ38336.1"/>
    <property type="molecule type" value="Genomic_DNA"/>
</dbReference>
<dbReference type="EMBL" id="AK065019">
    <property type="protein sequence ID" value="BAG89328.1"/>
    <property type="molecule type" value="mRNA"/>
</dbReference>
<dbReference type="RefSeq" id="XP_015643811.1">
    <property type="nucleotide sequence ID" value="XM_015788325.1"/>
</dbReference>
<dbReference type="SMR" id="Q5Z974"/>
<dbReference type="BioGRID" id="811150">
    <property type="interactions" value="1"/>
</dbReference>
<dbReference type="FunCoup" id="Q5Z974">
    <property type="interactions" value="719"/>
</dbReference>
<dbReference type="STRING" id="39947.Q5Z974"/>
<dbReference type="MEROPS" id="M41.020"/>
<dbReference type="PaxDb" id="39947-Q5Z974"/>
<dbReference type="EnsemblPlants" id="Os06t0725900-01">
    <property type="protein sequence ID" value="Os06t0725900-01"/>
    <property type="gene ID" value="Os06g0725900"/>
</dbReference>
<dbReference type="Gramene" id="Os06t0725900-01">
    <property type="protein sequence ID" value="Os06t0725900-01"/>
    <property type="gene ID" value="Os06g0725900"/>
</dbReference>
<dbReference type="KEGG" id="dosa:Os06g0725900"/>
<dbReference type="eggNOG" id="KOG0731">
    <property type="taxonomic scope" value="Eukaryota"/>
</dbReference>
<dbReference type="HOGENOM" id="CLU_000688_16_2_1"/>
<dbReference type="InParanoid" id="Q5Z974"/>
<dbReference type="OMA" id="LFLMNQM"/>
<dbReference type="OrthoDB" id="1413014at2759"/>
<dbReference type="Proteomes" id="UP000000763">
    <property type="component" value="Chromosome 6"/>
</dbReference>
<dbReference type="Proteomes" id="UP000007752">
    <property type="component" value="Chromosome 6"/>
</dbReference>
<dbReference type="Proteomes" id="UP000059680">
    <property type="component" value="Chromosome 6"/>
</dbReference>
<dbReference type="ExpressionAtlas" id="Q5Z974">
    <property type="expression patterns" value="baseline and differential"/>
</dbReference>
<dbReference type="GO" id="GO:0009535">
    <property type="term" value="C:chloroplast thylakoid membrane"/>
    <property type="evidence" value="ECO:0000318"/>
    <property type="project" value="GO_Central"/>
</dbReference>
<dbReference type="GO" id="GO:0005524">
    <property type="term" value="F:ATP binding"/>
    <property type="evidence" value="ECO:0007669"/>
    <property type="project" value="UniProtKB-KW"/>
</dbReference>
<dbReference type="GO" id="GO:0016887">
    <property type="term" value="F:ATP hydrolysis activity"/>
    <property type="evidence" value="ECO:0007669"/>
    <property type="project" value="InterPro"/>
</dbReference>
<dbReference type="GO" id="GO:0004176">
    <property type="term" value="F:ATP-dependent peptidase activity"/>
    <property type="evidence" value="ECO:0000318"/>
    <property type="project" value="GO_Central"/>
</dbReference>
<dbReference type="GO" id="GO:0046872">
    <property type="term" value="F:metal ion binding"/>
    <property type="evidence" value="ECO:0007669"/>
    <property type="project" value="UniProtKB-KW"/>
</dbReference>
<dbReference type="GO" id="GO:0004222">
    <property type="term" value="F:metalloendopeptidase activity"/>
    <property type="evidence" value="ECO:0007669"/>
    <property type="project" value="InterPro"/>
</dbReference>
<dbReference type="GO" id="GO:0051301">
    <property type="term" value="P:cell division"/>
    <property type="evidence" value="ECO:0007669"/>
    <property type="project" value="UniProtKB-KW"/>
</dbReference>
<dbReference type="GO" id="GO:0006508">
    <property type="term" value="P:proteolysis"/>
    <property type="evidence" value="ECO:0000318"/>
    <property type="project" value="GO_Central"/>
</dbReference>
<dbReference type="CDD" id="cd19501">
    <property type="entry name" value="RecA-like_FtsH"/>
    <property type="match status" value="1"/>
</dbReference>
<dbReference type="FunFam" id="1.10.8.60:FF:000001">
    <property type="entry name" value="ATP-dependent zinc metalloprotease FtsH"/>
    <property type="match status" value="1"/>
</dbReference>
<dbReference type="FunFam" id="1.20.58.760:FF:000001">
    <property type="entry name" value="ATP-dependent zinc metalloprotease FtsH"/>
    <property type="match status" value="1"/>
</dbReference>
<dbReference type="FunFam" id="3.40.50.300:FF:000001">
    <property type="entry name" value="ATP-dependent zinc metalloprotease FtsH"/>
    <property type="match status" value="1"/>
</dbReference>
<dbReference type="FunFam" id="3.30.720.210:FF:000003">
    <property type="entry name" value="ATP-dependent zinc metalloprotease FTSH, chloroplastic"/>
    <property type="match status" value="1"/>
</dbReference>
<dbReference type="Gene3D" id="1.10.8.60">
    <property type="match status" value="1"/>
</dbReference>
<dbReference type="Gene3D" id="3.30.720.210">
    <property type="match status" value="1"/>
</dbReference>
<dbReference type="Gene3D" id="3.40.50.300">
    <property type="entry name" value="P-loop containing nucleotide triphosphate hydrolases"/>
    <property type="match status" value="1"/>
</dbReference>
<dbReference type="Gene3D" id="1.20.58.760">
    <property type="entry name" value="Peptidase M41"/>
    <property type="match status" value="1"/>
</dbReference>
<dbReference type="HAMAP" id="MF_01458">
    <property type="entry name" value="FtsH"/>
    <property type="match status" value="1"/>
</dbReference>
<dbReference type="InterPro" id="IPR003593">
    <property type="entry name" value="AAA+_ATPase"/>
</dbReference>
<dbReference type="InterPro" id="IPR041569">
    <property type="entry name" value="AAA_lid_3"/>
</dbReference>
<dbReference type="InterPro" id="IPR003959">
    <property type="entry name" value="ATPase_AAA_core"/>
</dbReference>
<dbReference type="InterPro" id="IPR003960">
    <property type="entry name" value="ATPase_AAA_CS"/>
</dbReference>
<dbReference type="InterPro" id="IPR005936">
    <property type="entry name" value="FtsH"/>
</dbReference>
<dbReference type="InterPro" id="IPR027417">
    <property type="entry name" value="P-loop_NTPase"/>
</dbReference>
<dbReference type="InterPro" id="IPR000642">
    <property type="entry name" value="Peptidase_M41"/>
</dbReference>
<dbReference type="InterPro" id="IPR037219">
    <property type="entry name" value="Peptidase_M41-like"/>
</dbReference>
<dbReference type="NCBIfam" id="TIGR01241">
    <property type="entry name" value="FtsH_fam"/>
    <property type="match status" value="1"/>
</dbReference>
<dbReference type="PANTHER" id="PTHR23076:SF113">
    <property type="entry name" value="ATP-DEPENDENT ZINC METALLOPROTEASE FTSH 1, CHLOROPLASTIC-RELATED"/>
    <property type="match status" value="1"/>
</dbReference>
<dbReference type="PANTHER" id="PTHR23076">
    <property type="entry name" value="METALLOPROTEASE M41 FTSH"/>
    <property type="match status" value="1"/>
</dbReference>
<dbReference type="Pfam" id="PF00004">
    <property type="entry name" value="AAA"/>
    <property type="match status" value="1"/>
</dbReference>
<dbReference type="Pfam" id="PF17862">
    <property type="entry name" value="AAA_lid_3"/>
    <property type="match status" value="1"/>
</dbReference>
<dbReference type="Pfam" id="PF01434">
    <property type="entry name" value="Peptidase_M41"/>
    <property type="match status" value="1"/>
</dbReference>
<dbReference type="SMART" id="SM00382">
    <property type="entry name" value="AAA"/>
    <property type="match status" value="1"/>
</dbReference>
<dbReference type="SUPFAM" id="SSF140990">
    <property type="entry name" value="FtsH protease domain-like"/>
    <property type="match status" value="1"/>
</dbReference>
<dbReference type="SUPFAM" id="SSF52540">
    <property type="entry name" value="P-loop containing nucleoside triphosphate hydrolases"/>
    <property type="match status" value="1"/>
</dbReference>
<dbReference type="PROSITE" id="PS00674">
    <property type="entry name" value="AAA"/>
    <property type="match status" value="1"/>
</dbReference>
<gene>
    <name type="primary">FTSH1</name>
    <name type="ordered locus">Os06g0725900</name>
    <name type="ordered locus">LOC_Os06g51029</name>
    <name type="ORF">OsJ_021819</name>
    <name type="ORF">P0548E04.20</name>
</gene>
<keyword id="KW-0067">ATP-binding</keyword>
<keyword id="KW-0131">Cell cycle</keyword>
<keyword id="KW-0132">Cell division</keyword>
<keyword id="KW-0150">Chloroplast</keyword>
<keyword id="KW-0378">Hydrolase</keyword>
<keyword id="KW-0472">Membrane</keyword>
<keyword id="KW-0479">Metal-binding</keyword>
<keyword id="KW-0482">Metalloprotease</keyword>
<keyword id="KW-0547">Nucleotide-binding</keyword>
<keyword id="KW-0934">Plastid</keyword>
<keyword id="KW-0645">Protease</keyword>
<keyword id="KW-1185">Reference proteome</keyword>
<keyword id="KW-0793">Thylakoid</keyword>
<keyword id="KW-0809">Transit peptide</keyword>
<keyword id="KW-0812">Transmembrane</keyword>
<keyword id="KW-1133">Transmembrane helix</keyword>
<keyword id="KW-0862">Zinc</keyword>
<evidence type="ECO:0000250" key="1"/>
<evidence type="ECO:0000255" key="2"/>
<evidence type="ECO:0000305" key="3"/>
<comment type="function">
    <text evidence="1">Probable ATP-dependent zinc metallopeptidase.</text>
</comment>
<comment type="cofactor">
    <cofactor evidence="1">
        <name>Zn(2+)</name>
        <dbReference type="ChEBI" id="CHEBI:29105"/>
    </cofactor>
    <text evidence="1">Binds 1 zinc ion per subunit.</text>
</comment>
<comment type="subcellular location">
    <subcellularLocation>
        <location evidence="1">Plastid</location>
        <location evidence="1">Chloroplast thylakoid membrane</location>
        <topology evidence="1">Single-pass membrane protein</topology>
        <orientation evidence="1">Stromal side</orientation>
    </subcellularLocation>
</comment>
<comment type="similarity">
    <text evidence="3">In the N-terminal section; belongs to the AAA ATPase family.</text>
</comment>
<comment type="similarity">
    <text evidence="3">In the C-terminal section; belongs to the peptidase M41 family.</text>
</comment>
<sequence>MAPPCSISSASHLLITASLPKPSLRPPRLPHPKPLPAALLALAAAAPTLPALADVPAPPPSPTQDVQVLEAPSPAANPFSNALLTAPKPTSSAAADLPEGAQWRYSEFLSAVKKGKVERVRFSKDGGLLQLTAIDGRRATVVVPNDPDLIDILATNGVDISVAEGDAAGPGGFLAFVGNLLFPFLAFAGLFFLFRRAQGGPGAGPGGLGGPMDFGRSKSKFQEVPETGVTFVDVAGADQAKLELQEVVDFLKNPDKYTALGAKIPKGCLLVGPPGTGKTLLARAVAGEAGVPFFSCAASEFVELFVGVGASRVRDLFEKAKAKAPCIVFIDEIDAVGRQRGAGLGGGNDEREQTINQLLTEMDGFAGNSGVIVLAATNRPDVLDAALLRPGRFDRQVTVDRPDVAGRVKILEVHSRGKALAKDVDFEKIARRTPGFTGADLQNLMNEAAILAARRDLKEISKDEISDALERIIAGPEKKNAVVSEEKRRLVAYHEAGHALVGALMPEYDPVAKISIIPRGQAGGLTFFAPSEERLESGLYSRSYLENQMAVALGGRVAEEVIFGQENVTTGASNDFMQVSRVARQMVERFGFSKKIGQVAIGGPGGNPFLGQQMSSQKDYSMATADVVDAEVRELVEKAYSRATQIITTHIDILHKLAQLLMEKETVDGEEFMSLFIDGQAELFVA</sequence>
<reference key="1">
    <citation type="journal article" date="2005" name="Nature">
        <title>The map-based sequence of the rice genome.</title>
        <authorList>
            <consortium name="International rice genome sequencing project (IRGSP)"/>
        </authorList>
    </citation>
    <scope>NUCLEOTIDE SEQUENCE [LARGE SCALE GENOMIC DNA]</scope>
    <source>
        <strain>cv. Nipponbare</strain>
    </source>
</reference>
<reference key="2">
    <citation type="journal article" date="2008" name="Nucleic Acids Res.">
        <title>The rice annotation project database (RAP-DB): 2008 update.</title>
        <authorList>
            <consortium name="The rice annotation project (RAP)"/>
        </authorList>
    </citation>
    <scope>GENOME REANNOTATION</scope>
    <source>
        <strain>cv. Nipponbare</strain>
    </source>
</reference>
<reference key="3">
    <citation type="journal article" date="2013" name="Rice">
        <title>Improvement of the Oryza sativa Nipponbare reference genome using next generation sequence and optical map data.</title>
        <authorList>
            <person name="Kawahara Y."/>
            <person name="de la Bastide M."/>
            <person name="Hamilton J.P."/>
            <person name="Kanamori H."/>
            <person name="McCombie W.R."/>
            <person name="Ouyang S."/>
            <person name="Schwartz D.C."/>
            <person name="Tanaka T."/>
            <person name="Wu J."/>
            <person name="Zhou S."/>
            <person name="Childs K.L."/>
            <person name="Davidson R.M."/>
            <person name="Lin H."/>
            <person name="Quesada-Ocampo L."/>
            <person name="Vaillancourt B."/>
            <person name="Sakai H."/>
            <person name="Lee S.S."/>
            <person name="Kim J."/>
            <person name="Numa H."/>
            <person name="Itoh T."/>
            <person name="Buell C.R."/>
            <person name="Matsumoto T."/>
        </authorList>
    </citation>
    <scope>GENOME REANNOTATION</scope>
    <source>
        <strain>cv. Nipponbare</strain>
    </source>
</reference>
<reference key="4">
    <citation type="journal article" date="2005" name="PLoS Biol.">
        <title>The genomes of Oryza sativa: a history of duplications.</title>
        <authorList>
            <person name="Yu J."/>
            <person name="Wang J."/>
            <person name="Lin W."/>
            <person name="Li S."/>
            <person name="Li H."/>
            <person name="Zhou J."/>
            <person name="Ni P."/>
            <person name="Dong W."/>
            <person name="Hu S."/>
            <person name="Zeng C."/>
            <person name="Zhang J."/>
            <person name="Zhang Y."/>
            <person name="Li R."/>
            <person name="Xu Z."/>
            <person name="Li S."/>
            <person name="Li X."/>
            <person name="Zheng H."/>
            <person name="Cong L."/>
            <person name="Lin L."/>
            <person name="Yin J."/>
            <person name="Geng J."/>
            <person name="Li G."/>
            <person name="Shi J."/>
            <person name="Liu J."/>
            <person name="Lv H."/>
            <person name="Li J."/>
            <person name="Wang J."/>
            <person name="Deng Y."/>
            <person name="Ran L."/>
            <person name="Shi X."/>
            <person name="Wang X."/>
            <person name="Wu Q."/>
            <person name="Li C."/>
            <person name="Ren X."/>
            <person name="Wang J."/>
            <person name="Wang X."/>
            <person name="Li D."/>
            <person name="Liu D."/>
            <person name="Zhang X."/>
            <person name="Ji Z."/>
            <person name="Zhao W."/>
            <person name="Sun Y."/>
            <person name="Zhang Z."/>
            <person name="Bao J."/>
            <person name="Han Y."/>
            <person name="Dong L."/>
            <person name="Ji J."/>
            <person name="Chen P."/>
            <person name="Wu S."/>
            <person name="Liu J."/>
            <person name="Xiao Y."/>
            <person name="Bu D."/>
            <person name="Tan J."/>
            <person name="Yang L."/>
            <person name="Ye C."/>
            <person name="Zhang J."/>
            <person name="Xu J."/>
            <person name="Zhou Y."/>
            <person name="Yu Y."/>
            <person name="Zhang B."/>
            <person name="Zhuang S."/>
            <person name="Wei H."/>
            <person name="Liu B."/>
            <person name="Lei M."/>
            <person name="Yu H."/>
            <person name="Li Y."/>
            <person name="Xu H."/>
            <person name="Wei S."/>
            <person name="He X."/>
            <person name="Fang L."/>
            <person name="Zhang Z."/>
            <person name="Zhang Y."/>
            <person name="Huang X."/>
            <person name="Su Z."/>
            <person name="Tong W."/>
            <person name="Li J."/>
            <person name="Tong Z."/>
            <person name="Li S."/>
            <person name="Ye J."/>
            <person name="Wang L."/>
            <person name="Fang L."/>
            <person name="Lei T."/>
            <person name="Chen C.-S."/>
            <person name="Chen H.-C."/>
            <person name="Xu Z."/>
            <person name="Li H."/>
            <person name="Huang H."/>
            <person name="Zhang F."/>
            <person name="Xu H."/>
            <person name="Li N."/>
            <person name="Zhao C."/>
            <person name="Li S."/>
            <person name="Dong L."/>
            <person name="Huang Y."/>
            <person name="Li L."/>
            <person name="Xi Y."/>
            <person name="Qi Q."/>
            <person name="Li W."/>
            <person name="Zhang B."/>
            <person name="Hu W."/>
            <person name="Zhang Y."/>
            <person name="Tian X."/>
            <person name="Jiao Y."/>
            <person name="Liang X."/>
            <person name="Jin J."/>
            <person name="Gao L."/>
            <person name="Zheng W."/>
            <person name="Hao B."/>
            <person name="Liu S.-M."/>
            <person name="Wang W."/>
            <person name="Yuan L."/>
            <person name="Cao M."/>
            <person name="McDermott J."/>
            <person name="Samudrala R."/>
            <person name="Wang J."/>
            <person name="Wong G.K.-S."/>
            <person name="Yang H."/>
        </authorList>
    </citation>
    <scope>NUCLEOTIDE SEQUENCE [LARGE SCALE GENOMIC DNA]</scope>
    <source>
        <strain>cv. Nipponbare</strain>
    </source>
</reference>
<reference key="5">
    <citation type="journal article" date="2003" name="Science">
        <title>Collection, mapping, and annotation of over 28,000 cDNA clones from japonica rice.</title>
        <authorList>
            <consortium name="The rice full-length cDNA consortium"/>
        </authorList>
    </citation>
    <scope>NUCLEOTIDE SEQUENCE [LARGE SCALE MRNA]</scope>
    <source>
        <strain>cv. Nipponbare</strain>
    </source>
</reference>
<reference key="6">
    <citation type="journal article" date="2005" name="Plant Physiol.">
        <title>Functional redundancy of AtFtsH metalloproteases in thylakoid membrane complexes.</title>
        <authorList>
            <person name="Yu F."/>
            <person name="Park S."/>
            <person name="Rodermel S.R."/>
        </authorList>
    </citation>
    <scope>GENE FAMILY</scope>
    <scope>NOMENCLATURE</scope>
</reference>
<organism>
    <name type="scientific">Oryza sativa subsp. japonica</name>
    <name type="common">Rice</name>
    <dbReference type="NCBI Taxonomy" id="39947"/>
    <lineage>
        <taxon>Eukaryota</taxon>
        <taxon>Viridiplantae</taxon>
        <taxon>Streptophyta</taxon>
        <taxon>Embryophyta</taxon>
        <taxon>Tracheophyta</taxon>
        <taxon>Spermatophyta</taxon>
        <taxon>Magnoliopsida</taxon>
        <taxon>Liliopsida</taxon>
        <taxon>Poales</taxon>
        <taxon>Poaceae</taxon>
        <taxon>BOP clade</taxon>
        <taxon>Oryzoideae</taxon>
        <taxon>Oryzeae</taxon>
        <taxon>Oryzinae</taxon>
        <taxon>Oryza</taxon>
        <taxon>Oryza sativa</taxon>
    </lineage>
</organism>
<feature type="transit peptide" description="Chloroplast" evidence="2">
    <location>
        <begin position="1"/>
        <end position="16"/>
    </location>
</feature>
<feature type="transit peptide" description="Thylakoid" evidence="2">
    <location>
        <begin position="17"/>
        <end status="unknown"/>
    </location>
</feature>
<feature type="chain" id="PRO_0000247472" description="ATP-dependent zinc metalloprotease FTSH 1, chloroplastic">
    <location>
        <begin status="unknown"/>
        <end position="686"/>
    </location>
</feature>
<feature type="transmembrane region" description="Helical" evidence="2">
    <location>
        <begin position="173"/>
        <end position="193"/>
    </location>
</feature>
<feature type="active site" evidence="1">
    <location>
        <position position="495"/>
    </location>
</feature>
<feature type="binding site" evidence="2">
    <location>
        <begin position="272"/>
        <end position="279"/>
    </location>
    <ligand>
        <name>ATP</name>
        <dbReference type="ChEBI" id="CHEBI:30616"/>
    </ligand>
</feature>
<feature type="binding site" evidence="1">
    <location>
        <position position="494"/>
    </location>
    <ligand>
        <name>Zn(2+)</name>
        <dbReference type="ChEBI" id="CHEBI:29105"/>
        <note>catalytic</note>
    </ligand>
</feature>
<feature type="binding site" evidence="1">
    <location>
        <position position="498"/>
    </location>
    <ligand>
        <name>Zn(2+)</name>
        <dbReference type="ChEBI" id="CHEBI:29105"/>
        <note>catalytic</note>
    </ligand>
</feature>
<feature type="binding site" evidence="1">
    <location>
        <position position="575"/>
    </location>
    <ligand>
        <name>Zn(2+)</name>
        <dbReference type="ChEBI" id="CHEBI:29105"/>
        <note>catalytic</note>
    </ligand>
</feature>
<feature type="sequence conflict" description="In Ref. 4; EAZ38336." evidence="3" ref="4">
    <original>A</original>
    <variation>P</variation>
    <location>
        <position position="167"/>
    </location>
</feature>
<feature type="sequence conflict" description="In Ref. 4; EAZ38336." evidence="3" ref="4">
    <original>G</original>
    <variation>A</variation>
    <location>
        <position position="200"/>
    </location>
</feature>
<name>FTSH1_ORYSJ</name>
<proteinExistence type="evidence at transcript level"/>
<protein>
    <recommendedName>
        <fullName>ATP-dependent zinc metalloprotease FTSH 1, chloroplastic</fullName>
        <shortName>OsFTSH1</shortName>
        <ecNumber>3.4.24.-</ecNumber>
    </recommendedName>
</protein>